<proteinExistence type="inferred from homology"/>
<dbReference type="EMBL" id="BX293980">
    <property type="protein sequence ID" value="CAE76866.1"/>
    <property type="molecule type" value="Genomic_DNA"/>
</dbReference>
<dbReference type="RefSeq" id="NP_975224.1">
    <property type="nucleotide sequence ID" value="NC_005364.2"/>
</dbReference>
<dbReference type="RefSeq" id="WP_011166423.1">
    <property type="nucleotide sequence ID" value="NC_005364.2"/>
</dbReference>
<dbReference type="SMR" id="Q6MU20"/>
<dbReference type="STRING" id="272632.MSC_0223"/>
<dbReference type="KEGG" id="mmy:MSC_0223"/>
<dbReference type="PATRIC" id="fig|272632.4.peg.237"/>
<dbReference type="eggNOG" id="COG0292">
    <property type="taxonomic scope" value="Bacteria"/>
</dbReference>
<dbReference type="HOGENOM" id="CLU_123265_0_1_14"/>
<dbReference type="Proteomes" id="UP000001016">
    <property type="component" value="Chromosome"/>
</dbReference>
<dbReference type="GO" id="GO:1990904">
    <property type="term" value="C:ribonucleoprotein complex"/>
    <property type="evidence" value="ECO:0007669"/>
    <property type="project" value="UniProtKB-KW"/>
</dbReference>
<dbReference type="GO" id="GO:0005840">
    <property type="term" value="C:ribosome"/>
    <property type="evidence" value="ECO:0007669"/>
    <property type="project" value="UniProtKB-KW"/>
</dbReference>
<dbReference type="GO" id="GO:0019843">
    <property type="term" value="F:rRNA binding"/>
    <property type="evidence" value="ECO:0007669"/>
    <property type="project" value="UniProtKB-UniRule"/>
</dbReference>
<dbReference type="GO" id="GO:0003735">
    <property type="term" value="F:structural constituent of ribosome"/>
    <property type="evidence" value="ECO:0007669"/>
    <property type="project" value="InterPro"/>
</dbReference>
<dbReference type="GO" id="GO:0000027">
    <property type="term" value="P:ribosomal large subunit assembly"/>
    <property type="evidence" value="ECO:0007669"/>
    <property type="project" value="UniProtKB-UniRule"/>
</dbReference>
<dbReference type="GO" id="GO:0006412">
    <property type="term" value="P:translation"/>
    <property type="evidence" value="ECO:0007669"/>
    <property type="project" value="InterPro"/>
</dbReference>
<dbReference type="CDD" id="cd07026">
    <property type="entry name" value="Ribosomal_L20"/>
    <property type="match status" value="1"/>
</dbReference>
<dbReference type="FunFam" id="1.10.1900.20:FF:000001">
    <property type="entry name" value="50S ribosomal protein L20"/>
    <property type="match status" value="1"/>
</dbReference>
<dbReference type="Gene3D" id="6.10.160.10">
    <property type="match status" value="1"/>
</dbReference>
<dbReference type="Gene3D" id="1.10.1900.20">
    <property type="entry name" value="Ribosomal protein L20"/>
    <property type="match status" value="1"/>
</dbReference>
<dbReference type="HAMAP" id="MF_00382">
    <property type="entry name" value="Ribosomal_bL20"/>
    <property type="match status" value="1"/>
</dbReference>
<dbReference type="InterPro" id="IPR005813">
    <property type="entry name" value="Ribosomal_bL20"/>
</dbReference>
<dbReference type="InterPro" id="IPR049946">
    <property type="entry name" value="RIBOSOMAL_L20_CS"/>
</dbReference>
<dbReference type="InterPro" id="IPR035566">
    <property type="entry name" value="Ribosomal_protein_bL20_C"/>
</dbReference>
<dbReference type="NCBIfam" id="TIGR01032">
    <property type="entry name" value="rplT_bact"/>
    <property type="match status" value="1"/>
</dbReference>
<dbReference type="PANTHER" id="PTHR10986">
    <property type="entry name" value="39S RIBOSOMAL PROTEIN L20"/>
    <property type="match status" value="1"/>
</dbReference>
<dbReference type="Pfam" id="PF00453">
    <property type="entry name" value="Ribosomal_L20"/>
    <property type="match status" value="1"/>
</dbReference>
<dbReference type="PRINTS" id="PR00062">
    <property type="entry name" value="RIBOSOMALL20"/>
</dbReference>
<dbReference type="SUPFAM" id="SSF74731">
    <property type="entry name" value="Ribosomal protein L20"/>
    <property type="match status" value="1"/>
</dbReference>
<dbReference type="PROSITE" id="PS00937">
    <property type="entry name" value="RIBOSOMAL_L20"/>
    <property type="match status" value="1"/>
</dbReference>
<gene>
    <name evidence="1" type="primary">rplT</name>
    <name type="ordered locus">MSC_0223</name>
</gene>
<comment type="function">
    <text evidence="1">Binds directly to 23S ribosomal RNA and is necessary for the in vitro assembly process of the 50S ribosomal subunit. It is not involved in the protein synthesizing functions of that subunit.</text>
</comment>
<comment type="similarity">
    <text evidence="1">Belongs to the bacterial ribosomal protein bL20 family.</text>
</comment>
<keyword id="KW-1185">Reference proteome</keyword>
<keyword id="KW-0687">Ribonucleoprotein</keyword>
<keyword id="KW-0689">Ribosomal protein</keyword>
<keyword id="KW-0694">RNA-binding</keyword>
<keyword id="KW-0699">rRNA-binding</keyword>
<feature type="chain" id="PRO_0000177184" description="Large ribosomal subunit protein bL20">
    <location>
        <begin position="1"/>
        <end position="121"/>
    </location>
</feature>
<protein>
    <recommendedName>
        <fullName evidence="1">Large ribosomal subunit protein bL20</fullName>
    </recommendedName>
    <alternativeName>
        <fullName evidence="2">50S ribosomal protein L20</fullName>
    </alternativeName>
</protein>
<sequence length="121" mass="14217">MARVKYGKVKVTRARRKRWIKLAKGYFGTKKSSYKKAHEQVIRSMAYAFIGRKERKRDFRSLWIVRINAAVRPEGLSYSTFMHGLKLANININRKMLSELAINNNEEFKKIVKQAKKALNK</sequence>
<evidence type="ECO:0000255" key="1">
    <source>
        <dbReference type="HAMAP-Rule" id="MF_00382"/>
    </source>
</evidence>
<evidence type="ECO:0000305" key="2"/>
<organism>
    <name type="scientific">Mycoplasma mycoides subsp. mycoides SC (strain CCUG 32753 / NCTC 10114 / PG1)</name>
    <dbReference type="NCBI Taxonomy" id="272632"/>
    <lineage>
        <taxon>Bacteria</taxon>
        <taxon>Bacillati</taxon>
        <taxon>Mycoplasmatota</taxon>
        <taxon>Mollicutes</taxon>
        <taxon>Mycoplasmataceae</taxon>
        <taxon>Mycoplasma</taxon>
    </lineage>
</organism>
<accession>Q6MU20</accession>
<reference key="1">
    <citation type="journal article" date="2004" name="Genome Res.">
        <title>The genome sequence of Mycoplasma mycoides subsp. mycoides SC type strain PG1T, the causative agent of contagious bovine pleuropneumonia (CBPP).</title>
        <authorList>
            <person name="Westberg J."/>
            <person name="Persson A."/>
            <person name="Holmberg A."/>
            <person name="Goesmann A."/>
            <person name="Lundeberg J."/>
            <person name="Johansson K.-E."/>
            <person name="Pettersson B."/>
            <person name="Uhlen M."/>
        </authorList>
    </citation>
    <scope>NUCLEOTIDE SEQUENCE [LARGE SCALE GENOMIC DNA]</scope>
    <source>
        <strain>CCUG 32753 / NCTC 10114 / PG1</strain>
    </source>
</reference>
<name>RL20_MYCMS</name>